<keyword id="KW-0963">Cytoplasm</keyword>
<keyword id="KW-0342">GTP-binding</keyword>
<keyword id="KW-0378">Hydrolase</keyword>
<keyword id="KW-0547">Nucleotide-binding</keyword>
<keyword id="KW-1185">Reference proteome</keyword>
<keyword id="KW-0690">Ribosome biogenesis</keyword>
<keyword id="KW-0694">RNA-binding</keyword>
<keyword id="KW-0699">rRNA-binding</keyword>
<keyword id="KW-0820">tRNA-binding</keyword>
<accession>P72749</accession>
<organism>
    <name type="scientific">Synechocystis sp. (strain ATCC 27184 / PCC 6803 / Kazusa)</name>
    <dbReference type="NCBI Taxonomy" id="1111708"/>
    <lineage>
        <taxon>Bacteria</taxon>
        <taxon>Bacillati</taxon>
        <taxon>Cyanobacteriota</taxon>
        <taxon>Cyanophyceae</taxon>
        <taxon>Synechococcales</taxon>
        <taxon>Merismopediaceae</taxon>
        <taxon>Synechocystis</taxon>
    </lineage>
</organism>
<proteinExistence type="inferred from homology"/>
<feature type="chain" id="PRO_0000091558" description="Large ribosomal subunit assembly factor BipA">
    <location>
        <begin position="1"/>
        <end position="597"/>
    </location>
</feature>
<feature type="domain" description="tr-type G" evidence="1">
    <location>
        <begin position="3"/>
        <end position="198"/>
    </location>
</feature>
<feature type="binding site" evidence="1">
    <location>
        <begin position="15"/>
        <end position="20"/>
    </location>
    <ligand>
        <name>GTP</name>
        <dbReference type="ChEBI" id="CHEBI:37565"/>
    </ligand>
</feature>
<feature type="binding site" evidence="1">
    <location>
        <begin position="128"/>
        <end position="131"/>
    </location>
    <ligand>
        <name>GTP</name>
        <dbReference type="ChEBI" id="CHEBI:37565"/>
    </ligand>
</feature>
<gene>
    <name evidence="1" type="primary">bipA</name>
    <name type="ordered locus">slr1105</name>
</gene>
<protein>
    <recommendedName>
        <fullName evidence="1">Large ribosomal subunit assembly factor BipA</fullName>
        <ecNumber evidence="1">3.6.5.-</ecNumber>
    </recommendedName>
    <alternativeName>
        <fullName evidence="2">50S ribosomal subunit assembly factor BipA</fullName>
    </alternativeName>
    <alternativeName>
        <fullName evidence="1">GTP-binding protein BipA</fullName>
    </alternativeName>
</protein>
<dbReference type="EC" id="3.6.5.-" evidence="1"/>
<dbReference type="EMBL" id="BA000022">
    <property type="protein sequence ID" value="BAA16764.1"/>
    <property type="molecule type" value="Genomic_DNA"/>
</dbReference>
<dbReference type="PIR" id="S74612">
    <property type="entry name" value="S74612"/>
</dbReference>
<dbReference type="SMR" id="P72749"/>
<dbReference type="FunCoup" id="P72749">
    <property type="interactions" value="423"/>
</dbReference>
<dbReference type="STRING" id="1148.gene:10497620"/>
<dbReference type="PaxDb" id="1148-1651837"/>
<dbReference type="EnsemblBacteria" id="BAA16764">
    <property type="protein sequence ID" value="BAA16764"/>
    <property type="gene ID" value="BAA16764"/>
</dbReference>
<dbReference type="KEGG" id="syn:slr1105"/>
<dbReference type="eggNOG" id="COG1217">
    <property type="taxonomic scope" value="Bacteria"/>
</dbReference>
<dbReference type="InParanoid" id="P72749"/>
<dbReference type="PhylomeDB" id="P72749"/>
<dbReference type="Proteomes" id="UP000001425">
    <property type="component" value="Chromosome"/>
</dbReference>
<dbReference type="GO" id="GO:0005737">
    <property type="term" value="C:cytoplasm"/>
    <property type="evidence" value="ECO:0007669"/>
    <property type="project" value="UniProtKB-SubCell"/>
</dbReference>
<dbReference type="GO" id="GO:0005525">
    <property type="term" value="F:GTP binding"/>
    <property type="evidence" value="ECO:0007669"/>
    <property type="project" value="UniProtKB-UniRule"/>
</dbReference>
<dbReference type="GO" id="GO:0003924">
    <property type="term" value="F:GTPase activity"/>
    <property type="evidence" value="ECO:0007669"/>
    <property type="project" value="UniProtKB-UniRule"/>
</dbReference>
<dbReference type="GO" id="GO:0043022">
    <property type="term" value="F:ribosome binding"/>
    <property type="evidence" value="ECO:0007669"/>
    <property type="project" value="UniProtKB-UniRule"/>
</dbReference>
<dbReference type="GO" id="GO:0019843">
    <property type="term" value="F:rRNA binding"/>
    <property type="evidence" value="ECO:0007669"/>
    <property type="project" value="UniProtKB-KW"/>
</dbReference>
<dbReference type="GO" id="GO:0000049">
    <property type="term" value="F:tRNA binding"/>
    <property type="evidence" value="ECO:0007669"/>
    <property type="project" value="UniProtKB-KW"/>
</dbReference>
<dbReference type="GO" id="GO:0000027">
    <property type="term" value="P:ribosomal large subunit assembly"/>
    <property type="evidence" value="ECO:0007669"/>
    <property type="project" value="UniProtKB-UniRule"/>
</dbReference>
<dbReference type="GO" id="GO:0032790">
    <property type="term" value="P:ribosome disassembly"/>
    <property type="evidence" value="ECO:0000318"/>
    <property type="project" value="GO_Central"/>
</dbReference>
<dbReference type="CDD" id="cd16263">
    <property type="entry name" value="BipA_III"/>
    <property type="match status" value="1"/>
</dbReference>
<dbReference type="CDD" id="cd03710">
    <property type="entry name" value="BipA_TypA_C"/>
    <property type="match status" value="1"/>
</dbReference>
<dbReference type="CDD" id="cd03691">
    <property type="entry name" value="BipA_TypA_II"/>
    <property type="match status" value="1"/>
</dbReference>
<dbReference type="CDD" id="cd01891">
    <property type="entry name" value="TypA_BipA"/>
    <property type="match status" value="1"/>
</dbReference>
<dbReference type="FunFam" id="2.40.30.10:FF:000016">
    <property type="entry name" value="GTP-binding protein TypA"/>
    <property type="match status" value="1"/>
</dbReference>
<dbReference type="FunFam" id="2.40.50.250:FF:000001">
    <property type="entry name" value="GTP-binding protein TypA"/>
    <property type="match status" value="1"/>
</dbReference>
<dbReference type="FunFam" id="3.30.70.240:FF:000002">
    <property type="entry name" value="GTP-binding protein TypA"/>
    <property type="match status" value="1"/>
</dbReference>
<dbReference type="FunFam" id="3.30.70.870:FF:000003">
    <property type="entry name" value="GTP-binding protein TypA"/>
    <property type="match status" value="1"/>
</dbReference>
<dbReference type="FunFam" id="3.40.50.300:FF:000055">
    <property type="entry name" value="GTP-binding protein TypA"/>
    <property type="match status" value="1"/>
</dbReference>
<dbReference type="Gene3D" id="3.30.70.240">
    <property type="match status" value="1"/>
</dbReference>
<dbReference type="Gene3D" id="2.40.50.250">
    <property type="entry name" value="bipa protein"/>
    <property type="match status" value="1"/>
</dbReference>
<dbReference type="Gene3D" id="3.30.70.870">
    <property type="entry name" value="Elongation Factor G (Translational Gtpase), domain 3"/>
    <property type="match status" value="1"/>
</dbReference>
<dbReference type="Gene3D" id="3.40.50.300">
    <property type="entry name" value="P-loop containing nucleotide triphosphate hydrolases"/>
    <property type="match status" value="1"/>
</dbReference>
<dbReference type="Gene3D" id="2.40.30.10">
    <property type="entry name" value="Translation factors"/>
    <property type="match status" value="1"/>
</dbReference>
<dbReference type="HAMAP" id="MF_00849">
    <property type="entry name" value="BipA"/>
    <property type="match status" value="1"/>
</dbReference>
<dbReference type="InterPro" id="IPR006298">
    <property type="entry name" value="BipA"/>
</dbReference>
<dbReference type="InterPro" id="IPR048876">
    <property type="entry name" value="BipA_C"/>
</dbReference>
<dbReference type="InterPro" id="IPR047041">
    <property type="entry name" value="BipA_GTP-bd_dom"/>
</dbReference>
<dbReference type="InterPro" id="IPR047042">
    <property type="entry name" value="BipA_II"/>
</dbReference>
<dbReference type="InterPro" id="IPR047043">
    <property type="entry name" value="BipA_III"/>
</dbReference>
<dbReference type="InterPro" id="IPR035651">
    <property type="entry name" value="BipA_V"/>
</dbReference>
<dbReference type="InterPro" id="IPR041095">
    <property type="entry name" value="EFG_II"/>
</dbReference>
<dbReference type="InterPro" id="IPR035647">
    <property type="entry name" value="EFG_III/V"/>
</dbReference>
<dbReference type="InterPro" id="IPR000640">
    <property type="entry name" value="EFG_V-like"/>
</dbReference>
<dbReference type="InterPro" id="IPR004161">
    <property type="entry name" value="EFTu-like_2"/>
</dbReference>
<dbReference type="InterPro" id="IPR031157">
    <property type="entry name" value="G_TR_CS"/>
</dbReference>
<dbReference type="InterPro" id="IPR027417">
    <property type="entry name" value="P-loop_NTPase"/>
</dbReference>
<dbReference type="InterPro" id="IPR005225">
    <property type="entry name" value="Small_GTP-bd"/>
</dbReference>
<dbReference type="InterPro" id="IPR000795">
    <property type="entry name" value="T_Tr_GTP-bd_dom"/>
</dbReference>
<dbReference type="InterPro" id="IPR009000">
    <property type="entry name" value="Transl_B-barrel_sf"/>
</dbReference>
<dbReference type="InterPro" id="IPR042116">
    <property type="entry name" value="TypA/BipA_C"/>
</dbReference>
<dbReference type="NCBIfam" id="TIGR00231">
    <property type="entry name" value="small_GTP"/>
    <property type="match status" value="1"/>
</dbReference>
<dbReference type="NCBIfam" id="TIGR01394">
    <property type="entry name" value="TypA_BipA"/>
    <property type="match status" value="1"/>
</dbReference>
<dbReference type="PANTHER" id="PTHR42908:SF8">
    <property type="entry name" value="TR-TYPE G DOMAIN-CONTAINING PROTEIN"/>
    <property type="match status" value="1"/>
</dbReference>
<dbReference type="PANTHER" id="PTHR42908">
    <property type="entry name" value="TRANSLATION ELONGATION FACTOR-RELATED"/>
    <property type="match status" value="1"/>
</dbReference>
<dbReference type="Pfam" id="PF21018">
    <property type="entry name" value="BipA_C"/>
    <property type="match status" value="1"/>
</dbReference>
<dbReference type="Pfam" id="PF00679">
    <property type="entry name" value="EFG_C"/>
    <property type="match status" value="1"/>
</dbReference>
<dbReference type="Pfam" id="PF14492">
    <property type="entry name" value="EFG_III"/>
    <property type="match status" value="1"/>
</dbReference>
<dbReference type="Pfam" id="PF00009">
    <property type="entry name" value="GTP_EFTU"/>
    <property type="match status" value="1"/>
</dbReference>
<dbReference type="Pfam" id="PF03144">
    <property type="entry name" value="GTP_EFTU_D2"/>
    <property type="match status" value="1"/>
</dbReference>
<dbReference type="PRINTS" id="PR00315">
    <property type="entry name" value="ELONGATNFCT"/>
</dbReference>
<dbReference type="SUPFAM" id="SSF54980">
    <property type="entry name" value="EF-G C-terminal domain-like"/>
    <property type="match status" value="2"/>
</dbReference>
<dbReference type="SUPFAM" id="SSF52540">
    <property type="entry name" value="P-loop containing nucleoside triphosphate hydrolases"/>
    <property type="match status" value="1"/>
</dbReference>
<dbReference type="SUPFAM" id="SSF50447">
    <property type="entry name" value="Translation proteins"/>
    <property type="match status" value="1"/>
</dbReference>
<dbReference type="PROSITE" id="PS00301">
    <property type="entry name" value="G_TR_1"/>
    <property type="match status" value="1"/>
</dbReference>
<dbReference type="PROSITE" id="PS51722">
    <property type="entry name" value="G_TR_2"/>
    <property type="match status" value="1"/>
</dbReference>
<reference key="1">
    <citation type="journal article" date="1996" name="DNA Res.">
        <title>Sequence analysis of the genome of the unicellular cyanobacterium Synechocystis sp. strain PCC6803. II. Sequence determination of the entire genome and assignment of potential protein-coding regions.</title>
        <authorList>
            <person name="Kaneko T."/>
            <person name="Sato S."/>
            <person name="Kotani H."/>
            <person name="Tanaka A."/>
            <person name="Asamizu E."/>
            <person name="Nakamura Y."/>
            <person name="Miyajima N."/>
            <person name="Hirosawa M."/>
            <person name="Sugiura M."/>
            <person name="Sasamoto S."/>
            <person name="Kimura T."/>
            <person name="Hosouchi T."/>
            <person name="Matsuno A."/>
            <person name="Muraki A."/>
            <person name="Nakazaki N."/>
            <person name="Naruo K."/>
            <person name="Okumura S."/>
            <person name="Shimpo S."/>
            <person name="Takeuchi C."/>
            <person name="Wada T."/>
            <person name="Watanabe A."/>
            <person name="Yamada M."/>
            <person name="Yasuda M."/>
            <person name="Tabata S."/>
        </authorList>
    </citation>
    <scope>NUCLEOTIDE SEQUENCE [LARGE SCALE GENOMIC DNA]</scope>
    <source>
        <strain>ATCC 27184 / PCC 6803 / Kazusa</strain>
    </source>
</reference>
<sequence>MSLPIRNVAIIAHVDHGKTTLVDALLKQSGIFREGEDVPVCVMDSNDLERERGITILSKNTAVRYQDTLINIVDTPGHADFGGEVERVLGMVDGCVLIVDANEGPMPQTRFVLKKALEKGLRPLVVVNKIDRPRADPNTAVDKVFDLFVELGADDDQCDFTTLFASGLGGFAKESLDDDSEDMKPLFEAILHHVPPPAGDPNKPLQLQVTTLDYSDYLGRIIIGRIHNGTVKAGQQAALVKEDGSIAKGKVSKLLGFEGLNRIELPEASAGYIVAIAGFADANIGETLTCPDEPQALPLIKVDEPTLQMTFSVNDSPFAGQEGKFVTSRQIRDRLNRELETNVALRVEDGESAEQFLVSGRGELHLGILIETMRREGYEFQVAQPQVIYREVNGQPCEPVEYLVLDVPEAAVGACIERLGQRRGEMQDMQTSVNGRTQLEFVIPARGLLGFRGDFIRITRGEGIMNHSFLEYRPMSGDLETRYNGVMVAFEEGVATFYAMKNAEDRGVFFITPGTKVYKGMIIGEHNRPQDIELNVCKTKQLTNHRSATGDELVQLQAPEDMNLERALEYIGPDELVEITPESIRLRKVARKKLVKR</sequence>
<evidence type="ECO:0000255" key="1">
    <source>
        <dbReference type="HAMAP-Rule" id="MF_00849"/>
    </source>
</evidence>
<evidence type="ECO:0000305" key="2"/>
<name>BIPA_SYNY3</name>
<comment type="function">
    <text evidence="1">A 50S ribosomal subunit assembly protein with GTPase activity, required for 50S subunit assembly at low temperatures, may also play a role in translation. Binds GTP and analogs. Binds the 70S ribosome between the 30S and 50S subunits, in a similar position as ribosome-bound EF-G; it contacts a number of ribosomal proteins, both rRNAs and the A-site tRNA.</text>
</comment>
<comment type="catalytic activity">
    <reaction evidence="1">
        <text>GTP + H2O = GDP + phosphate + H(+)</text>
        <dbReference type="Rhea" id="RHEA:19669"/>
        <dbReference type="ChEBI" id="CHEBI:15377"/>
        <dbReference type="ChEBI" id="CHEBI:15378"/>
        <dbReference type="ChEBI" id="CHEBI:37565"/>
        <dbReference type="ChEBI" id="CHEBI:43474"/>
        <dbReference type="ChEBI" id="CHEBI:58189"/>
    </reaction>
</comment>
<comment type="subunit">
    <text evidence="1">Monomer.</text>
</comment>
<comment type="subcellular location">
    <subcellularLocation>
        <location evidence="1">Cytoplasm</location>
    </subcellularLocation>
    <text evidence="1">Binds to ribosomes.</text>
</comment>
<comment type="similarity">
    <text evidence="1">Belongs to the TRAFAC class translation factor GTPase superfamily. Classic translation factor GTPase family. BipA subfamily.</text>
</comment>